<comment type="function">
    <text evidence="1">Catalyzes the attachment of tyrosine to tRNA(Tyr) in a two-step reaction: tyrosine is first activated by ATP to form Tyr-AMP and then transferred to the acceptor end of tRNA(Tyr).</text>
</comment>
<comment type="catalytic activity">
    <reaction evidence="1">
        <text>tRNA(Tyr) + L-tyrosine + ATP = L-tyrosyl-tRNA(Tyr) + AMP + diphosphate + H(+)</text>
        <dbReference type="Rhea" id="RHEA:10220"/>
        <dbReference type="Rhea" id="RHEA-COMP:9706"/>
        <dbReference type="Rhea" id="RHEA-COMP:9707"/>
        <dbReference type="ChEBI" id="CHEBI:15378"/>
        <dbReference type="ChEBI" id="CHEBI:30616"/>
        <dbReference type="ChEBI" id="CHEBI:33019"/>
        <dbReference type="ChEBI" id="CHEBI:58315"/>
        <dbReference type="ChEBI" id="CHEBI:78442"/>
        <dbReference type="ChEBI" id="CHEBI:78536"/>
        <dbReference type="ChEBI" id="CHEBI:456215"/>
        <dbReference type="EC" id="6.1.1.1"/>
    </reaction>
</comment>
<comment type="subunit">
    <text evidence="1">Homodimer.</text>
</comment>
<comment type="subcellular location">
    <subcellularLocation>
        <location evidence="1">Cytoplasm</location>
    </subcellularLocation>
</comment>
<comment type="similarity">
    <text evidence="1">Belongs to the class-I aminoacyl-tRNA synthetase family. TyrS type 1 subfamily.</text>
</comment>
<evidence type="ECO:0000255" key="1">
    <source>
        <dbReference type="HAMAP-Rule" id="MF_02006"/>
    </source>
</evidence>
<sequence>MANVLDTLMERGYIKQFTHEAETRELLEKEKVTFYIGFDPTADSLHVGHFIAMMFMAHMQKAGHRPIALIGGGTATIGDPSGKTDMRKMMTNETIAHNVACIKKQMEKFIDFSDDKAILVNNADWLLNQNYVEFLREVGVHFSVNRMLSAECFKQRLERGLSFLEFNYMLMQGYDFYVLNKKYNCKMELGGDDQWSNMIAGVELVRKKSQESAYAMTCTLLTNSEGQKMGKTVNGALWLDPEKTSPYEFYQYWRNVNDADVEKCLKLLTFIPMDEVRRLSSLEGSQINEAKKVLAFEVTKLVHGEEEATKAKQAAEALFGKGGDMSNVPTYEMGKDKLGSELLDILVEAEIVPSKAEGKRLVKQGGLSLNGEKVADFKKTLEEADFENGEVLIKRGKKNYNKIVLA</sequence>
<reference key="1">
    <citation type="journal article" date="2006" name="Genome Res.">
        <title>Skewed genomic variability in strains of the toxigenic bacterial pathogen, Clostridium perfringens.</title>
        <authorList>
            <person name="Myers G.S.A."/>
            <person name="Rasko D.A."/>
            <person name="Cheung J.K."/>
            <person name="Ravel J."/>
            <person name="Seshadri R."/>
            <person name="DeBoy R.T."/>
            <person name="Ren Q."/>
            <person name="Varga J."/>
            <person name="Awad M.M."/>
            <person name="Brinkac L.M."/>
            <person name="Daugherty S.C."/>
            <person name="Haft D.H."/>
            <person name="Dodson R.J."/>
            <person name="Madupu R."/>
            <person name="Nelson W.C."/>
            <person name="Rosovitz M.J."/>
            <person name="Sullivan S.A."/>
            <person name="Khouri H."/>
            <person name="Dimitrov G.I."/>
            <person name="Watkins K.L."/>
            <person name="Mulligan S."/>
            <person name="Benton J."/>
            <person name="Radune D."/>
            <person name="Fisher D.J."/>
            <person name="Atkins H.S."/>
            <person name="Hiscox T."/>
            <person name="Jost B.H."/>
            <person name="Billington S.J."/>
            <person name="Songer J.G."/>
            <person name="McClane B.A."/>
            <person name="Titball R.W."/>
            <person name="Rood J.I."/>
            <person name="Melville S.B."/>
            <person name="Paulsen I.T."/>
        </authorList>
    </citation>
    <scope>NUCLEOTIDE SEQUENCE [LARGE SCALE GENOMIC DNA]</scope>
    <source>
        <strain>ATCC 13124 / DSM 756 / JCM 1290 / NCIMB 6125 / NCTC 8237 / S 107 / Type A</strain>
    </source>
</reference>
<accession>Q0TTF4</accession>
<proteinExistence type="inferred from homology"/>
<name>SYY_CLOP1</name>
<organism>
    <name type="scientific">Clostridium perfringens (strain ATCC 13124 / DSM 756 / JCM 1290 / NCIMB 6125 / NCTC 8237 / Type A)</name>
    <dbReference type="NCBI Taxonomy" id="195103"/>
    <lineage>
        <taxon>Bacteria</taxon>
        <taxon>Bacillati</taxon>
        <taxon>Bacillota</taxon>
        <taxon>Clostridia</taxon>
        <taxon>Eubacteriales</taxon>
        <taxon>Clostridiaceae</taxon>
        <taxon>Clostridium</taxon>
    </lineage>
</organism>
<gene>
    <name evidence="1" type="primary">tyrS</name>
    <name type="ordered locus">CPF_0633</name>
</gene>
<dbReference type="EC" id="6.1.1.1" evidence="1"/>
<dbReference type="EMBL" id="CP000246">
    <property type="protein sequence ID" value="ABG83841.1"/>
    <property type="molecule type" value="Genomic_DNA"/>
</dbReference>
<dbReference type="RefSeq" id="WP_011590286.1">
    <property type="nucleotide sequence ID" value="NC_008261.1"/>
</dbReference>
<dbReference type="SMR" id="Q0TTF4"/>
<dbReference type="STRING" id="195103.CPF_0633"/>
<dbReference type="PaxDb" id="195103-CPF_0633"/>
<dbReference type="KEGG" id="cpf:CPF_0633"/>
<dbReference type="eggNOG" id="COG0162">
    <property type="taxonomic scope" value="Bacteria"/>
</dbReference>
<dbReference type="HOGENOM" id="CLU_024003_0_3_9"/>
<dbReference type="Proteomes" id="UP000001823">
    <property type="component" value="Chromosome"/>
</dbReference>
<dbReference type="GO" id="GO:0005829">
    <property type="term" value="C:cytosol"/>
    <property type="evidence" value="ECO:0007669"/>
    <property type="project" value="TreeGrafter"/>
</dbReference>
<dbReference type="GO" id="GO:0005524">
    <property type="term" value="F:ATP binding"/>
    <property type="evidence" value="ECO:0007669"/>
    <property type="project" value="UniProtKB-UniRule"/>
</dbReference>
<dbReference type="GO" id="GO:0003723">
    <property type="term" value="F:RNA binding"/>
    <property type="evidence" value="ECO:0007669"/>
    <property type="project" value="UniProtKB-KW"/>
</dbReference>
<dbReference type="GO" id="GO:0004831">
    <property type="term" value="F:tyrosine-tRNA ligase activity"/>
    <property type="evidence" value="ECO:0007669"/>
    <property type="project" value="UniProtKB-UniRule"/>
</dbReference>
<dbReference type="GO" id="GO:0006437">
    <property type="term" value="P:tyrosyl-tRNA aminoacylation"/>
    <property type="evidence" value="ECO:0007669"/>
    <property type="project" value="UniProtKB-UniRule"/>
</dbReference>
<dbReference type="CDD" id="cd00165">
    <property type="entry name" value="S4"/>
    <property type="match status" value="1"/>
</dbReference>
<dbReference type="CDD" id="cd00805">
    <property type="entry name" value="TyrRS_core"/>
    <property type="match status" value="1"/>
</dbReference>
<dbReference type="FunFam" id="1.10.240.10:FF:000001">
    <property type="entry name" value="Tyrosine--tRNA ligase"/>
    <property type="match status" value="1"/>
</dbReference>
<dbReference type="FunFam" id="3.40.50.620:FF:000008">
    <property type="entry name" value="Tyrosine--tRNA ligase"/>
    <property type="match status" value="1"/>
</dbReference>
<dbReference type="Gene3D" id="3.40.50.620">
    <property type="entry name" value="HUPs"/>
    <property type="match status" value="1"/>
</dbReference>
<dbReference type="Gene3D" id="3.10.290.10">
    <property type="entry name" value="RNA-binding S4 domain"/>
    <property type="match status" value="1"/>
</dbReference>
<dbReference type="Gene3D" id="1.10.240.10">
    <property type="entry name" value="Tyrosyl-Transfer RNA Synthetase"/>
    <property type="match status" value="1"/>
</dbReference>
<dbReference type="HAMAP" id="MF_02006">
    <property type="entry name" value="Tyr_tRNA_synth_type1"/>
    <property type="match status" value="1"/>
</dbReference>
<dbReference type="InterPro" id="IPR001412">
    <property type="entry name" value="aa-tRNA-synth_I_CS"/>
</dbReference>
<dbReference type="InterPro" id="IPR002305">
    <property type="entry name" value="aa-tRNA-synth_Ic"/>
</dbReference>
<dbReference type="InterPro" id="IPR014729">
    <property type="entry name" value="Rossmann-like_a/b/a_fold"/>
</dbReference>
<dbReference type="InterPro" id="IPR036986">
    <property type="entry name" value="S4_RNA-bd_sf"/>
</dbReference>
<dbReference type="InterPro" id="IPR054608">
    <property type="entry name" value="SYY-like_C"/>
</dbReference>
<dbReference type="InterPro" id="IPR002307">
    <property type="entry name" value="Tyr-tRNA-ligase"/>
</dbReference>
<dbReference type="InterPro" id="IPR024088">
    <property type="entry name" value="Tyr-tRNA-ligase_bac-type"/>
</dbReference>
<dbReference type="InterPro" id="IPR024107">
    <property type="entry name" value="Tyr-tRNA-ligase_bac_1"/>
</dbReference>
<dbReference type="NCBIfam" id="TIGR00234">
    <property type="entry name" value="tyrS"/>
    <property type="match status" value="1"/>
</dbReference>
<dbReference type="PANTHER" id="PTHR11766:SF0">
    <property type="entry name" value="TYROSINE--TRNA LIGASE, MITOCHONDRIAL"/>
    <property type="match status" value="1"/>
</dbReference>
<dbReference type="PANTHER" id="PTHR11766">
    <property type="entry name" value="TYROSYL-TRNA SYNTHETASE"/>
    <property type="match status" value="1"/>
</dbReference>
<dbReference type="Pfam" id="PF22421">
    <property type="entry name" value="SYY_C-terminal"/>
    <property type="match status" value="1"/>
</dbReference>
<dbReference type="Pfam" id="PF00579">
    <property type="entry name" value="tRNA-synt_1b"/>
    <property type="match status" value="1"/>
</dbReference>
<dbReference type="PRINTS" id="PR01040">
    <property type="entry name" value="TRNASYNTHTYR"/>
</dbReference>
<dbReference type="SUPFAM" id="SSF55174">
    <property type="entry name" value="Alpha-L RNA-binding motif"/>
    <property type="match status" value="1"/>
</dbReference>
<dbReference type="SUPFAM" id="SSF52374">
    <property type="entry name" value="Nucleotidylyl transferase"/>
    <property type="match status" value="1"/>
</dbReference>
<dbReference type="PROSITE" id="PS00178">
    <property type="entry name" value="AA_TRNA_LIGASE_I"/>
    <property type="match status" value="1"/>
</dbReference>
<dbReference type="PROSITE" id="PS50889">
    <property type="entry name" value="S4"/>
    <property type="match status" value="1"/>
</dbReference>
<feature type="chain" id="PRO_1000189282" description="Tyrosine--tRNA ligase">
    <location>
        <begin position="1"/>
        <end position="406"/>
    </location>
</feature>
<feature type="domain" description="S4 RNA-binding" evidence="1">
    <location>
        <begin position="340"/>
        <end position="404"/>
    </location>
</feature>
<feature type="short sequence motif" description="'HIGH' region">
    <location>
        <begin position="40"/>
        <end position="49"/>
    </location>
</feature>
<feature type="short sequence motif" description="'KMSKS' region">
    <location>
        <begin position="228"/>
        <end position="232"/>
    </location>
</feature>
<feature type="binding site" evidence="1">
    <location>
        <position position="35"/>
    </location>
    <ligand>
        <name>L-tyrosine</name>
        <dbReference type="ChEBI" id="CHEBI:58315"/>
    </ligand>
</feature>
<feature type="binding site" evidence="1">
    <location>
        <position position="168"/>
    </location>
    <ligand>
        <name>L-tyrosine</name>
        <dbReference type="ChEBI" id="CHEBI:58315"/>
    </ligand>
</feature>
<feature type="binding site" evidence="1">
    <location>
        <position position="172"/>
    </location>
    <ligand>
        <name>L-tyrosine</name>
        <dbReference type="ChEBI" id="CHEBI:58315"/>
    </ligand>
</feature>
<feature type="binding site" evidence="1">
    <location>
        <position position="231"/>
    </location>
    <ligand>
        <name>ATP</name>
        <dbReference type="ChEBI" id="CHEBI:30616"/>
    </ligand>
</feature>
<keyword id="KW-0030">Aminoacyl-tRNA synthetase</keyword>
<keyword id="KW-0067">ATP-binding</keyword>
<keyword id="KW-0963">Cytoplasm</keyword>
<keyword id="KW-0436">Ligase</keyword>
<keyword id="KW-0547">Nucleotide-binding</keyword>
<keyword id="KW-0648">Protein biosynthesis</keyword>
<keyword id="KW-0694">RNA-binding</keyword>
<protein>
    <recommendedName>
        <fullName evidence="1">Tyrosine--tRNA ligase</fullName>
        <ecNumber evidence="1">6.1.1.1</ecNumber>
    </recommendedName>
    <alternativeName>
        <fullName evidence="1">Tyrosyl-tRNA synthetase</fullName>
        <shortName evidence="1">TyrRS</shortName>
    </alternativeName>
</protein>